<sequence>MCILKLPIVLLVLSVAVNHLQASPVESHQVEKRKCNTVTCATQRLANFLIHSSNNFGAIFSPPSVGS</sequence>
<keyword id="KW-0034">Amyloid</keyword>
<keyword id="KW-0165">Cleavage on pair of basic residues</keyword>
<keyword id="KW-1015">Disulfide bond</keyword>
<keyword id="KW-0372">Hormone</keyword>
<keyword id="KW-1185">Reference proteome</keyword>
<keyword id="KW-0964">Secreted</keyword>
<keyword id="KW-0732">Signal</keyword>
<comment type="function">
    <text evidence="2 3">Amylin/IAPP is a glucoregulatory peptide hormone that plays an important role in the regulation of energy homeostasis (By similarity). Selectively inhibits insulin-stimulated glucose utilization and glycogen deposition in muscle, while not affecting adipocyte glucose metabolism. IAPP function is mediated by the CALCR-RAMPs (AMYRs) receptor complexes. Amylin can also bind CALCR receptor in the absence of RAMPs, although it is more selective for AMYRs (By similarity).</text>
</comment>
<comment type="subunit">
    <text evidence="2 3">Can form homodimers. Interacts with IDE and INS. Interaction with INS inhibits homodimerization and fibril formation (By similarity).</text>
</comment>
<comment type="subcellular location">
    <subcellularLocation>
        <location evidence="2">Secreted</location>
    </subcellularLocation>
</comment>
<comment type="domain">
    <text evidence="1">The mature protein is largely unstructured in the absence of a cognate ligand, and has a strong tendency to form fibrillar aggregates.</text>
</comment>
<comment type="similarity">
    <text evidence="5">Belongs to the calcitonin family.</text>
</comment>
<organism>
    <name type="scientific">Oryctolagus cuniculus</name>
    <name type="common">Rabbit</name>
    <dbReference type="NCBI Taxonomy" id="9986"/>
    <lineage>
        <taxon>Eukaryota</taxon>
        <taxon>Metazoa</taxon>
        <taxon>Chordata</taxon>
        <taxon>Craniata</taxon>
        <taxon>Vertebrata</taxon>
        <taxon>Euteleostomi</taxon>
        <taxon>Mammalia</taxon>
        <taxon>Eutheria</taxon>
        <taxon>Euarchontoglires</taxon>
        <taxon>Glires</taxon>
        <taxon>Lagomorpha</taxon>
        <taxon>Leporidae</taxon>
        <taxon>Oryctolagus</taxon>
    </lineage>
</organism>
<evidence type="ECO:0000250" key="1"/>
<evidence type="ECO:0000250" key="2">
    <source>
        <dbReference type="UniProtKB" id="P10997"/>
    </source>
</evidence>
<evidence type="ECO:0000250" key="3">
    <source>
        <dbReference type="UniProtKB" id="P12969"/>
    </source>
</evidence>
<evidence type="ECO:0000255" key="4"/>
<evidence type="ECO:0000305" key="5"/>
<reference key="1">
    <citation type="submission" date="2000-02" db="EMBL/GenBank/DDBJ databases">
        <title>Indels indicate that rodents are monophyletic and lagomorphs are their sister group.</title>
        <authorList>
            <person name="van Dijk M.A.M."/>
            <person name="de Jong W.W."/>
        </authorList>
    </citation>
    <scope>NUCLEOTIDE SEQUENCE [MRNA] OF 1-66</scope>
</reference>
<reference key="2">
    <citation type="submission" date="1996-08" db="EMBL/GenBank/DDBJ databases">
        <title>PCR amplification of amylin 3-34 from genomic DNA.</title>
        <authorList>
            <person name="Albrandt K."/>
            <person name="Sierzega M.E."/>
            <person name="Mull E."/>
            <person name="Brady E.M.G."/>
        </authorList>
    </citation>
    <scope>NUCLEOTIDE SEQUENCE [GENOMIC DNA] OF 36-67</scope>
</reference>
<reference key="3">
    <citation type="journal article" date="1993" name="Diabetologia">
        <title>Islet amyloid polypeptide in the rabbit and European hare: studies on its relationship to amyloidogenesis.</title>
        <authorList>
            <person name="Christmanson L."/>
            <person name="Betsholtz C."/>
            <person name="Leckstroem A."/>
            <person name="Engstroem U."/>
            <person name="Cortie C."/>
            <person name="Johnson K.H."/>
            <person name="Adrian T.E."/>
            <person name="Westermark P."/>
        </authorList>
    </citation>
    <scope>NUCLEOTIDE SEQUENCE [MRNA] OF 42-64</scope>
    <source>
        <strain>New Zealand white</strain>
    </source>
</reference>
<proteinExistence type="evidence at transcript level"/>
<dbReference type="EMBL" id="AJ286814">
    <property type="protein sequence ID" value="CAC28529.1"/>
    <property type="molecule type" value="mRNA"/>
</dbReference>
<dbReference type="EMBL" id="U62630">
    <property type="protein sequence ID" value="AAB05917.1"/>
    <property type="molecule type" value="Genomic_DNA"/>
</dbReference>
<dbReference type="EMBL" id="S57804">
    <property type="protein sequence ID" value="AAB26084.1"/>
    <property type="molecule type" value="mRNA"/>
</dbReference>
<dbReference type="PIR" id="I46934">
    <property type="entry name" value="I46934"/>
</dbReference>
<dbReference type="STRING" id="9986.ENSOCUP00000002553"/>
<dbReference type="PaxDb" id="9986-ENSOCUP00000002553"/>
<dbReference type="eggNOG" id="ENOG502S4AQ">
    <property type="taxonomic scope" value="Eukaryota"/>
</dbReference>
<dbReference type="InParanoid" id="Q07334"/>
<dbReference type="Proteomes" id="UP000001811">
    <property type="component" value="Unplaced"/>
</dbReference>
<dbReference type="GO" id="GO:0005615">
    <property type="term" value="C:extracellular space"/>
    <property type="evidence" value="ECO:0007669"/>
    <property type="project" value="TreeGrafter"/>
</dbReference>
<dbReference type="GO" id="GO:0005179">
    <property type="term" value="F:hormone activity"/>
    <property type="evidence" value="ECO:0000250"/>
    <property type="project" value="UniProtKB"/>
</dbReference>
<dbReference type="GO" id="GO:0048018">
    <property type="term" value="F:receptor ligand activity"/>
    <property type="evidence" value="ECO:0000250"/>
    <property type="project" value="UniProtKB"/>
</dbReference>
<dbReference type="GO" id="GO:0097647">
    <property type="term" value="P:amylin receptor signaling pathway"/>
    <property type="evidence" value="ECO:0000250"/>
    <property type="project" value="UniProtKB"/>
</dbReference>
<dbReference type="Gene3D" id="6.10.250.2190">
    <property type="match status" value="1"/>
</dbReference>
<dbReference type="InterPro" id="IPR021117">
    <property type="entry name" value="Calcitonin-like"/>
</dbReference>
<dbReference type="InterPro" id="IPR021116">
    <property type="entry name" value="Calcitonin/adrenomedullin"/>
</dbReference>
<dbReference type="InterPro" id="IPR001693">
    <property type="entry name" value="Calcitonin_peptide-like"/>
</dbReference>
<dbReference type="InterPro" id="IPR000443">
    <property type="entry name" value="IAPP"/>
</dbReference>
<dbReference type="PANTHER" id="PTHR10505">
    <property type="entry name" value="CALCITONIN-RELATED"/>
    <property type="match status" value="1"/>
</dbReference>
<dbReference type="PANTHER" id="PTHR10505:SF4">
    <property type="entry name" value="ISLET AMYLOID POLYPEPTIDE"/>
    <property type="match status" value="1"/>
</dbReference>
<dbReference type="Pfam" id="PF00214">
    <property type="entry name" value="Calc_CGRP_IAPP"/>
    <property type="match status" value="1"/>
</dbReference>
<dbReference type="PRINTS" id="PR00818">
    <property type="entry name" value="ISLETAMYLOID"/>
</dbReference>
<dbReference type="SMART" id="SM00113">
    <property type="entry name" value="CALCITONIN"/>
    <property type="match status" value="1"/>
</dbReference>
<accession>Q07334</accession>
<accession>Q28741</accession>
<accession>Q9BED7</accession>
<protein>
    <recommendedName>
        <fullName>Islet amyloid polypeptide</fullName>
        <shortName>IAPP</shortName>
    </recommendedName>
    <alternativeName>
        <fullName>Amylin</fullName>
    </alternativeName>
</protein>
<name>IAPP_RABIT</name>
<feature type="signal peptide" evidence="4">
    <location>
        <begin position="1"/>
        <end position="22"/>
    </location>
</feature>
<feature type="propeptide" id="PRO_0000004119" evidence="1">
    <location>
        <begin position="23"/>
        <end position="31"/>
    </location>
</feature>
<feature type="peptide" id="PRO_0000004120" description="Islet amyloid polypeptide">
    <location>
        <begin position="35"/>
        <end position="67" status="greater than"/>
    </location>
</feature>
<feature type="disulfide bond" evidence="3">
    <location>
        <begin position="35"/>
        <end position="40"/>
    </location>
</feature>
<feature type="non-terminal residue">
    <location>
        <position position="67"/>
    </location>
</feature>
<gene>
    <name type="primary">IAPP</name>
</gene>